<evidence type="ECO:0000255" key="1">
    <source>
        <dbReference type="HAMAP-Rule" id="MF_00168"/>
    </source>
</evidence>
<accession>A5WGS6</accession>
<protein>
    <recommendedName>
        <fullName evidence="1">Queuine tRNA-ribosyltransferase</fullName>
        <ecNumber evidence="1">2.4.2.29</ecNumber>
    </recommendedName>
    <alternativeName>
        <fullName evidence="1">Guanine insertion enzyme</fullName>
    </alternativeName>
    <alternativeName>
        <fullName evidence="1">tRNA-guanine transglycosylase</fullName>
    </alternativeName>
</protein>
<organism>
    <name type="scientific">Psychrobacter sp. (strain PRwf-1)</name>
    <dbReference type="NCBI Taxonomy" id="349106"/>
    <lineage>
        <taxon>Bacteria</taxon>
        <taxon>Pseudomonadati</taxon>
        <taxon>Pseudomonadota</taxon>
        <taxon>Gammaproteobacteria</taxon>
        <taxon>Moraxellales</taxon>
        <taxon>Moraxellaceae</taxon>
        <taxon>Psychrobacter</taxon>
    </lineage>
</organism>
<sequence length="383" mass="43446">MQFTLHKTAAGESRARRGTVTVNHGEIRTPAFMPVGTYGTVKGMLPRDIEDIGADIILGNTFHLWLRPGTEVIDKFGGLHQFMNWNKPILTDSGGFQVFSLGAMRKITEEGVAFKSPIDGAKVFLSPEKSMQIQYSLNSDIVMQFDECTPYPATYSEAQKSLELSLRWGQRCVDEHKKLGNTNALFGIVQGSMYEDLRRQSMDGLLEIGFDGYAIGGLSVGEPKEEMISVLNYMPELMPADKPRYLMGVGKPEDILEAVRRGVDMFDCVMPTRNARNGHYFVTGNEDNQGIVRIRNSQYREDQGPLDPECDCYCCQNFSRAYLYHLNKCKEMLGAQLATIHNLRYYQRLMQGIRDAIDEDRFDEFVADFYHRRGQDVPPLELK</sequence>
<dbReference type="EC" id="2.4.2.29" evidence="1"/>
<dbReference type="EMBL" id="CP000713">
    <property type="protein sequence ID" value="ABQ94867.1"/>
    <property type="molecule type" value="Genomic_DNA"/>
</dbReference>
<dbReference type="SMR" id="A5WGS6"/>
<dbReference type="STRING" id="349106.PsycPRwf_1927"/>
<dbReference type="KEGG" id="prw:PsycPRwf_1927"/>
<dbReference type="eggNOG" id="COG0343">
    <property type="taxonomic scope" value="Bacteria"/>
</dbReference>
<dbReference type="HOGENOM" id="CLU_022060_0_1_6"/>
<dbReference type="UniPathway" id="UPA00392"/>
<dbReference type="GO" id="GO:0005829">
    <property type="term" value="C:cytosol"/>
    <property type="evidence" value="ECO:0007669"/>
    <property type="project" value="TreeGrafter"/>
</dbReference>
<dbReference type="GO" id="GO:0046872">
    <property type="term" value="F:metal ion binding"/>
    <property type="evidence" value="ECO:0007669"/>
    <property type="project" value="UniProtKB-KW"/>
</dbReference>
<dbReference type="GO" id="GO:0008479">
    <property type="term" value="F:tRNA-guanosine(34) queuine transglycosylase activity"/>
    <property type="evidence" value="ECO:0007669"/>
    <property type="project" value="UniProtKB-UniRule"/>
</dbReference>
<dbReference type="GO" id="GO:0008616">
    <property type="term" value="P:queuosine biosynthetic process"/>
    <property type="evidence" value="ECO:0007669"/>
    <property type="project" value="UniProtKB-UniRule"/>
</dbReference>
<dbReference type="GO" id="GO:0002099">
    <property type="term" value="P:tRNA wobble guanine modification"/>
    <property type="evidence" value="ECO:0007669"/>
    <property type="project" value="TreeGrafter"/>
</dbReference>
<dbReference type="GO" id="GO:0101030">
    <property type="term" value="P:tRNA-guanine transglycosylation"/>
    <property type="evidence" value="ECO:0007669"/>
    <property type="project" value="InterPro"/>
</dbReference>
<dbReference type="FunFam" id="3.20.20.105:FF:000001">
    <property type="entry name" value="Queuine tRNA-ribosyltransferase"/>
    <property type="match status" value="1"/>
</dbReference>
<dbReference type="Gene3D" id="3.20.20.105">
    <property type="entry name" value="Queuine tRNA-ribosyltransferase-like"/>
    <property type="match status" value="1"/>
</dbReference>
<dbReference type="HAMAP" id="MF_00168">
    <property type="entry name" value="Q_tRNA_Tgt"/>
    <property type="match status" value="1"/>
</dbReference>
<dbReference type="InterPro" id="IPR050076">
    <property type="entry name" value="ArchSynthase1/Queuine_TRR"/>
</dbReference>
<dbReference type="InterPro" id="IPR004803">
    <property type="entry name" value="TGT"/>
</dbReference>
<dbReference type="InterPro" id="IPR036511">
    <property type="entry name" value="TGT-like_sf"/>
</dbReference>
<dbReference type="InterPro" id="IPR002616">
    <property type="entry name" value="tRNA_ribo_trans-like"/>
</dbReference>
<dbReference type="NCBIfam" id="TIGR00430">
    <property type="entry name" value="Q_tRNA_tgt"/>
    <property type="match status" value="1"/>
</dbReference>
<dbReference type="NCBIfam" id="TIGR00449">
    <property type="entry name" value="tgt_general"/>
    <property type="match status" value="1"/>
</dbReference>
<dbReference type="PANTHER" id="PTHR46499">
    <property type="entry name" value="QUEUINE TRNA-RIBOSYLTRANSFERASE"/>
    <property type="match status" value="1"/>
</dbReference>
<dbReference type="PANTHER" id="PTHR46499:SF1">
    <property type="entry name" value="QUEUINE TRNA-RIBOSYLTRANSFERASE"/>
    <property type="match status" value="1"/>
</dbReference>
<dbReference type="Pfam" id="PF01702">
    <property type="entry name" value="TGT"/>
    <property type="match status" value="1"/>
</dbReference>
<dbReference type="SUPFAM" id="SSF51713">
    <property type="entry name" value="tRNA-guanine transglycosylase"/>
    <property type="match status" value="1"/>
</dbReference>
<gene>
    <name evidence="1" type="primary">tgt</name>
    <name type="ordered locus">PsycPRwf_1927</name>
</gene>
<name>TGT_PSYWF</name>
<proteinExistence type="inferred from homology"/>
<keyword id="KW-0328">Glycosyltransferase</keyword>
<keyword id="KW-0479">Metal-binding</keyword>
<keyword id="KW-0671">Queuosine biosynthesis</keyword>
<keyword id="KW-0808">Transferase</keyword>
<keyword id="KW-0819">tRNA processing</keyword>
<keyword id="KW-0862">Zinc</keyword>
<reference key="1">
    <citation type="submission" date="2007-05" db="EMBL/GenBank/DDBJ databases">
        <title>Complete sequence of chromosome of Psychrobacter sp. PRwf-1.</title>
        <authorList>
            <consortium name="US DOE Joint Genome Institute"/>
            <person name="Copeland A."/>
            <person name="Lucas S."/>
            <person name="Lapidus A."/>
            <person name="Barry K."/>
            <person name="Detter J.C."/>
            <person name="Glavina del Rio T."/>
            <person name="Hammon N."/>
            <person name="Israni S."/>
            <person name="Dalin E."/>
            <person name="Tice H."/>
            <person name="Pitluck S."/>
            <person name="Chain P."/>
            <person name="Malfatti S."/>
            <person name="Shin M."/>
            <person name="Vergez L."/>
            <person name="Schmutz J."/>
            <person name="Larimer F."/>
            <person name="Land M."/>
            <person name="Hauser L."/>
            <person name="Kyrpides N."/>
            <person name="Kim E."/>
            <person name="Tiedje J."/>
            <person name="Richardson P."/>
        </authorList>
    </citation>
    <scope>NUCLEOTIDE SEQUENCE [LARGE SCALE GENOMIC DNA]</scope>
    <source>
        <strain>PRwf-1</strain>
    </source>
</reference>
<comment type="function">
    <text evidence="1">Catalyzes the base-exchange of a guanine (G) residue with the queuine precursor 7-aminomethyl-7-deazaguanine (PreQ1) at position 34 (anticodon wobble position) in tRNAs with GU(N) anticodons (tRNA-Asp, -Asn, -His and -Tyr). Catalysis occurs through a double-displacement mechanism. The nucleophile active site attacks the C1' of nucleotide 34 to detach the guanine base from the RNA, forming a covalent enzyme-RNA intermediate. The proton acceptor active site deprotonates the incoming PreQ1, allowing a nucleophilic attack on the C1' of the ribose to form the product. After dissociation, two additional enzymatic reactions on the tRNA convert PreQ1 to queuine (Q), resulting in the hypermodified nucleoside queuosine (7-(((4,5-cis-dihydroxy-2-cyclopenten-1-yl)amino)methyl)-7-deazaguanosine).</text>
</comment>
<comment type="catalytic activity">
    <reaction evidence="1">
        <text>7-aminomethyl-7-carbaguanine + guanosine(34) in tRNA = 7-aminomethyl-7-carbaguanosine(34) in tRNA + guanine</text>
        <dbReference type="Rhea" id="RHEA:24104"/>
        <dbReference type="Rhea" id="RHEA-COMP:10341"/>
        <dbReference type="Rhea" id="RHEA-COMP:10342"/>
        <dbReference type="ChEBI" id="CHEBI:16235"/>
        <dbReference type="ChEBI" id="CHEBI:58703"/>
        <dbReference type="ChEBI" id="CHEBI:74269"/>
        <dbReference type="ChEBI" id="CHEBI:82833"/>
        <dbReference type="EC" id="2.4.2.29"/>
    </reaction>
</comment>
<comment type="cofactor">
    <cofactor evidence="1">
        <name>Zn(2+)</name>
        <dbReference type="ChEBI" id="CHEBI:29105"/>
    </cofactor>
    <text evidence="1">Binds 1 zinc ion per subunit.</text>
</comment>
<comment type="pathway">
    <text evidence="1">tRNA modification; tRNA-queuosine biosynthesis.</text>
</comment>
<comment type="subunit">
    <text evidence="1">Homodimer. Within each dimer, one monomer is responsible for RNA recognition and catalysis, while the other monomer binds to the replacement base PreQ1.</text>
</comment>
<comment type="similarity">
    <text evidence="1">Belongs to the queuine tRNA-ribosyltransferase family.</text>
</comment>
<feature type="chain" id="PRO_1000203661" description="Queuine tRNA-ribosyltransferase">
    <location>
        <begin position="1"/>
        <end position="383"/>
    </location>
</feature>
<feature type="region of interest" description="RNA binding" evidence="1">
    <location>
        <begin position="248"/>
        <end position="254"/>
    </location>
</feature>
<feature type="region of interest" description="RNA binding; important for wobble base 34 recognition" evidence="1">
    <location>
        <begin position="272"/>
        <end position="276"/>
    </location>
</feature>
<feature type="active site" description="Proton acceptor" evidence="1">
    <location>
        <position position="92"/>
    </location>
</feature>
<feature type="active site" description="Nucleophile" evidence="1">
    <location>
        <position position="267"/>
    </location>
</feature>
<feature type="binding site" evidence="1">
    <location>
        <begin position="92"/>
        <end position="96"/>
    </location>
    <ligand>
        <name>substrate</name>
    </ligand>
</feature>
<feature type="binding site" evidence="1">
    <location>
        <position position="146"/>
    </location>
    <ligand>
        <name>substrate</name>
    </ligand>
</feature>
<feature type="binding site" evidence="1">
    <location>
        <position position="190"/>
    </location>
    <ligand>
        <name>substrate</name>
    </ligand>
</feature>
<feature type="binding site" evidence="1">
    <location>
        <position position="217"/>
    </location>
    <ligand>
        <name>substrate</name>
    </ligand>
</feature>
<feature type="binding site" evidence="1">
    <location>
        <position position="310"/>
    </location>
    <ligand>
        <name>Zn(2+)</name>
        <dbReference type="ChEBI" id="CHEBI:29105"/>
    </ligand>
</feature>
<feature type="binding site" evidence="1">
    <location>
        <position position="312"/>
    </location>
    <ligand>
        <name>Zn(2+)</name>
        <dbReference type="ChEBI" id="CHEBI:29105"/>
    </ligand>
</feature>
<feature type="binding site" evidence="1">
    <location>
        <position position="315"/>
    </location>
    <ligand>
        <name>Zn(2+)</name>
        <dbReference type="ChEBI" id="CHEBI:29105"/>
    </ligand>
</feature>
<feature type="binding site" evidence="1">
    <location>
        <position position="341"/>
    </location>
    <ligand>
        <name>Zn(2+)</name>
        <dbReference type="ChEBI" id="CHEBI:29105"/>
    </ligand>
</feature>